<accession>Q12158</accession>
<accession>D6VRY5</accession>
<accession>Q05325</accession>
<comment type="function">
    <text evidence="2 7 8 9">Cleavable component of the cohesin complex involved in chromosome cohesion during cell cycle. The cohesin complex is required for the cohesion of sister chromatids after DNA replication. The cohesin complex apparently forms a large proteinaceous ring within which sister chromatids can be trapped. At metaphase-anaphase transition, this protein is cleaved by ESP1 and dissociates from chromatin, allowing sister chromatids to segregate.</text>
</comment>
<comment type="subunit">
    <text evidence="5 10">Interacts directly with IRR1/SCC3 in cohesin complex. Cohesin complexes are composed of the SMC1 and SMC3 heterodimer attached via their hinge domain, MCD1/SCC1 which link them, and IRR1, which interacts with MCD1. The cohesin complex also interacts with SCC2, which is required for its association with chromosomes.</text>
</comment>
<comment type="interaction">
    <interactant intactId="EBI-16655">
        <id>Q12158</id>
    </interactant>
    <interactant intactId="EBI-16667">
        <id>P40541</id>
        <label>IRR1</label>
    </interactant>
    <organismsDiffer>false</organismsDiffer>
    <experiments>8</experiments>
</comment>
<comment type="interaction">
    <interactant intactId="EBI-16655">
        <id>Q12158</id>
    </interactant>
    <interactant intactId="EBI-17402">
        <id>P32908</id>
        <label>SMC1</label>
    </interactant>
    <organismsDiffer>false</organismsDiffer>
    <experiments>10</experiments>
</comment>
<comment type="interaction">
    <interactant intactId="EBI-16655">
        <id>Q12158</id>
    </interactant>
    <interactant intactId="EBI-17423">
        <id>P47037</id>
        <label>SMC3</label>
    </interactant>
    <organismsDiffer>false</organismsDiffer>
    <experiments>14</experiments>
</comment>
<comment type="subcellular location">
    <subcellularLocation>
        <location evidence="7 8 10">Nucleus</location>
    </subcellularLocation>
    <subcellularLocation>
        <location evidence="7 10">Chromosome</location>
    </subcellularLocation>
    <subcellularLocation>
        <location evidence="10">Chromosome</location>
        <location evidence="10">Centromere</location>
    </subcellularLocation>
    <text evidence="10">Associates with chromatin. Before prophase it is scattered along chromosome arms. During prophase, most of cohesin complexes dissociate from chromatin except at centromeres, where cohesin complexes remain. At anaphase, it is cleaved by ESP1, leading to the dissociation of the complex from chromosomes, allowing chromosome separation.</text>
</comment>
<comment type="domain">
    <text>The C-terminal part associates with the head of SMC1, while the N-terminal part binds to the head of SMC3.</text>
</comment>
<comment type="PTM">
    <text>Cleaved by ESP1 at the onset of anaphase.</text>
</comment>
<comment type="PTM">
    <text evidence="2 3">Phosphorylated by CDC5/Polo-like kinase at the onset of anaphase. Phosphorylation takes places at proximity to cleavage sites and is required for an efficient cleavage by ESP1.</text>
</comment>
<comment type="PTM">
    <text evidence="4">Acetylated by ECO1.</text>
</comment>
<comment type="miscellaneous">
    <text evidence="6">Present with 1040 molecules/cell in log phase SD medium.</text>
</comment>
<comment type="similarity">
    <text evidence="11">Belongs to the rad21 family.</text>
</comment>
<dbReference type="EMBL" id="Y14280">
    <property type="protein sequence ID" value="CAA74657.1"/>
    <property type="molecule type" value="Genomic_DNA"/>
</dbReference>
<dbReference type="EMBL" id="U23759">
    <property type="protein sequence ID" value="AAB38803.1"/>
    <property type="molecule type" value="Genomic_DNA"/>
</dbReference>
<dbReference type="EMBL" id="Z48008">
    <property type="protein sequence ID" value="CAA88058.1"/>
    <property type="molecule type" value="Genomic_DNA"/>
</dbReference>
<dbReference type="EMBL" id="Z48432">
    <property type="protein sequence ID" value="CAA88356.1"/>
    <property type="molecule type" value="Genomic_DNA"/>
</dbReference>
<dbReference type="EMBL" id="Z74051">
    <property type="protein sequence ID" value="CAA98559.1"/>
    <property type="molecule type" value="Genomic_DNA"/>
</dbReference>
<dbReference type="EMBL" id="BK006938">
    <property type="protein sequence ID" value="DAA11845.1"/>
    <property type="molecule type" value="Genomic_DNA"/>
</dbReference>
<dbReference type="PIR" id="S50979">
    <property type="entry name" value="S50979"/>
</dbReference>
<dbReference type="RefSeq" id="NP_010281.1">
    <property type="nucleotide sequence ID" value="NM_001180062.1"/>
</dbReference>
<dbReference type="PDB" id="1W1W">
    <property type="method" value="X-ray"/>
    <property type="resolution" value="2.90 A"/>
    <property type="chains" value="E/F/G/H=451-564"/>
</dbReference>
<dbReference type="PDB" id="4UX3">
    <property type="method" value="X-ray"/>
    <property type="resolution" value="3.30 A"/>
    <property type="chains" value="B=1-115"/>
</dbReference>
<dbReference type="PDB" id="5FRP">
    <property type="method" value="X-ray"/>
    <property type="resolution" value="2.90 A"/>
    <property type="chains" value="C/D=116-159"/>
</dbReference>
<dbReference type="PDB" id="5FRS">
    <property type="method" value="X-ray"/>
    <property type="resolution" value="4.07 A"/>
    <property type="chains" value="C=126-142"/>
</dbReference>
<dbReference type="PDB" id="6H8Q">
    <property type="method" value="X-ray"/>
    <property type="resolution" value="3.63 A"/>
    <property type="chains" value="G/H=301-400"/>
</dbReference>
<dbReference type="PDB" id="6QPQ">
    <property type="method" value="X-ray"/>
    <property type="resolution" value="2.10 A"/>
    <property type="chains" value="B/D=1-566"/>
</dbReference>
<dbReference type="PDB" id="6QPW">
    <property type="method" value="EM"/>
    <property type="resolution" value="3.30 A"/>
    <property type="chains" value="B=480-564, E=1-160"/>
</dbReference>
<dbReference type="PDB" id="6ZZ6">
    <property type="method" value="EM"/>
    <property type="resolution" value="3.40 A"/>
    <property type="chains" value="C=67-555"/>
</dbReference>
<dbReference type="PDBsum" id="1W1W"/>
<dbReference type="PDBsum" id="4UX3"/>
<dbReference type="PDBsum" id="5FRP"/>
<dbReference type="PDBsum" id="5FRS"/>
<dbReference type="PDBsum" id="6H8Q"/>
<dbReference type="PDBsum" id="6QPQ"/>
<dbReference type="PDBsum" id="6QPW"/>
<dbReference type="PDBsum" id="6ZZ6"/>
<dbReference type="EMDB" id="EMD-11585"/>
<dbReference type="EMDB" id="EMD-4616"/>
<dbReference type="SMR" id="Q12158"/>
<dbReference type="BioGRID" id="32051">
    <property type="interactions" value="670"/>
</dbReference>
<dbReference type="ComplexPortal" id="CPX-1867">
    <property type="entry name" value="Nuclear mitotic cohesin complex"/>
</dbReference>
<dbReference type="DIP" id="DIP-5812N"/>
<dbReference type="ELM" id="Q12158"/>
<dbReference type="FunCoup" id="Q12158">
    <property type="interactions" value="296"/>
</dbReference>
<dbReference type="IntAct" id="Q12158">
    <property type="interactions" value="48"/>
</dbReference>
<dbReference type="MINT" id="Q12158"/>
<dbReference type="STRING" id="4932.YDL003W"/>
<dbReference type="GlyGen" id="Q12158">
    <property type="glycosylation" value="1 site"/>
</dbReference>
<dbReference type="iPTMnet" id="Q12158"/>
<dbReference type="PaxDb" id="4932-YDL003W"/>
<dbReference type="PeptideAtlas" id="Q12158"/>
<dbReference type="TopDownProteomics" id="Q12158"/>
<dbReference type="EnsemblFungi" id="YDL003W_mRNA">
    <property type="protein sequence ID" value="YDL003W"/>
    <property type="gene ID" value="YDL003W"/>
</dbReference>
<dbReference type="GeneID" id="851561"/>
<dbReference type="KEGG" id="sce:YDL003W"/>
<dbReference type="AGR" id="SGD:S000002161"/>
<dbReference type="SGD" id="S000002161">
    <property type="gene designation" value="MCD1"/>
</dbReference>
<dbReference type="VEuPathDB" id="FungiDB:YDL003W"/>
<dbReference type="eggNOG" id="KOG1213">
    <property type="taxonomic scope" value="Eukaryota"/>
</dbReference>
<dbReference type="GeneTree" id="ENSGT00940000170664"/>
<dbReference type="HOGENOM" id="CLU_462364_0_0_1"/>
<dbReference type="InParanoid" id="Q12158"/>
<dbReference type="OMA" id="IWLASNM"/>
<dbReference type="OrthoDB" id="10071381at2759"/>
<dbReference type="BioCyc" id="YEAST:G3O-29434-MONOMER"/>
<dbReference type="Reactome" id="R-SCE-2468052">
    <property type="pathway name" value="Establishment of Sister Chromatid Cohesion"/>
</dbReference>
<dbReference type="Reactome" id="R-SCE-2500257">
    <property type="pathway name" value="Resolution of Sister Chromatid Cohesion"/>
</dbReference>
<dbReference type="Reactome" id="R-SCE-3108214">
    <property type="pathway name" value="SUMOylation of DNA damage response and repair proteins"/>
</dbReference>
<dbReference type="CD-CODE" id="5F622AE2">
    <property type="entry name" value="Synthetic Condensate 000372"/>
</dbReference>
<dbReference type="EvolutionaryTrace" id="Q12158"/>
<dbReference type="PRO" id="PR:Q12158"/>
<dbReference type="Proteomes" id="UP000002311">
    <property type="component" value="Chromosome IV"/>
</dbReference>
<dbReference type="RNAct" id="Q12158">
    <property type="molecule type" value="protein"/>
</dbReference>
<dbReference type="GO" id="GO:0000775">
    <property type="term" value="C:chromosome, centromeric region"/>
    <property type="evidence" value="ECO:0007669"/>
    <property type="project" value="UniProtKB-SubCell"/>
</dbReference>
<dbReference type="GO" id="GO:0000794">
    <property type="term" value="C:condensed nuclear chromosome"/>
    <property type="evidence" value="ECO:0000314"/>
    <property type="project" value="SGD"/>
</dbReference>
<dbReference type="GO" id="GO:0005739">
    <property type="term" value="C:mitochondrion"/>
    <property type="evidence" value="ECO:0000314"/>
    <property type="project" value="SGD"/>
</dbReference>
<dbReference type="GO" id="GO:0030892">
    <property type="term" value="C:mitotic cohesin complex"/>
    <property type="evidence" value="ECO:0000314"/>
    <property type="project" value="SGD"/>
</dbReference>
<dbReference type="GO" id="GO:0005634">
    <property type="term" value="C:nucleus"/>
    <property type="evidence" value="ECO:0000314"/>
    <property type="project" value="SGD"/>
</dbReference>
<dbReference type="GO" id="GO:0003682">
    <property type="term" value="F:chromatin binding"/>
    <property type="evidence" value="ECO:0000314"/>
    <property type="project" value="SGD"/>
</dbReference>
<dbReference type="GO" id="GO:0019901">
    <property type="term" value="F:protein kinase binding"/>
    <property type="evidence" value="ECO:0000353"/>
    <property type="project" value="SGD"/>
</dbReference>
<dbReference type="GO" id="GO:0006915">
    <property type="term" value="P:apoptotic process"/>
    <property type="evidence" value="ECO:0000315"/>
    <property type="project" value="SGD"/>
</dbReference>
<dbReference type="GO" id="GO:0051301">
    <property type="term" value="P:cell division"/>
    <property type="evidence" value="ECO:0007669"/>
    <property type="project" value="UniProtKB-KW"/>
</dbReference>
<dbReference type="GO" id="GO:0006974">
    <property type="term" value="P:DNA damage response"/>
    <property type="evidence" value="ECO:0000315"/>
    <property type="project" value="SGD"/>
</dbReference>
<dbReference type="GO" id="GO:0006302">
    <property type="term" value="P:double-strand break repair"/>
    <property type="evidence" value="ECO:0000315"/>
    <property type="project" value="SGD"/>
</dbReference>
<dbReference type="GO" id="GO:0034087">
    <property type="term" value="P:establishment of mitotic sister chromatid cohesion"/>
    <property type="evidence" value="ECO:0000315"/>
    <property type="project" value="SGD"/>
</dbReference>
<dbReference type="GO" id="GO:0000086">
    <property type="term" value="P:G2/M transition of mitotic cell cycle"/>
    <property type="evidence" value="ECO:0000353"/>
    <property type="project" value="SGD"/>
</dbReference>
<dbReference type="GO" id="GO:0007076">
    <property type="term" value="P:mitotic chromosome condensation"/>
    <property type="evidence" value="ECO:0000315"/>
    <property type="project" value="SGD"/>
</dbReference>
<dbReference type="GO" id="GO:0007064">
    <property type="term" value="P:mitotic sister chromatid cohesion"/>
    <property type="evidence" value="ECO:0000318"/>
    <property type="project" value="GO_Central"/>
</dbReference>
<dbReference type="GO" id="GO:0006473">
    <property type="term" value="P:protein acetylation"/>
    <property type="evidence" value="ECO:0000314"/>
    <property type="project" value="UniProtKB"/>
</dbReference>
<dbReference type="GO" id="GO:1990414">
    <property type="term" value="P:replication-born double-strand break repair via sister chromatid exchange"/>
    <property type="evidence" value="ECO:0000315"/>
    <property type="project" value="SGD"/>
</dbReference>
<dbReference type="CDD" id="cd21791">
    <property type="entry name" value="Rad21_Rec8_M_ScScc1p-like"/>
    <property type="match status" value="1"/>
</dbReference>
<dbReference type="Gene3D" id="1.10.10.580">
    <property type="entry name" value="Structural maintenance of chromosome 1. Chain E"/>
    <property type="match status" value="1"/>
</dbReference>
<dbReference type="InterPro" id="IPR039781">
    <property type="entry name" value="Rad21/Rec8-like"/>
</dbReference>
<dbReference type="InterPro" id="IPR006909">
    <property type="entry name" value="Rad21/Rec8_C_eu"/>
</dbReference>
<dbReference type="InterPro" id="IPR006910">
    <property type="entry name" value="Rad21_Rec8_N"/>
</dbReference>
<dbReference type="InterPro" id="IPR023093">
    <property type="entry name" value="ScpA-like_C"/>
</dbReference>
<dbReference type="InterPro" id="IPR036390">
    <property type="entry name" value="WH_DNA-bd_sf"/>
</dbReference>
<dbReference type="PANTHER" id="PTHR12585:SF69">
    <property type="entry name" value="FI11703P"/>
    <property type="match status" value="1"/>
</dbReference>
<dbReference type="PANTHER" id="PTHR12585">
    <property type="entry name" value="SCC1 / RAD21 FAMILY MEMBER"/>
    <property type="match status" value="1"/>
</dbReference>
<dbReference type="Pfam" id="PF04824">
    <property type="entry name" value="Rad21_Rec8"/>
    <property type="match status" value="1"/>
</dbReference>
<dbReference type="Pfam" id="PF04825">
    <property type="entry name" value="Rad21_Rec8_N"/>
    <property type="match status" value="1"/>
</dbReference>
<dbReference type="SUPFAM" id="SSF46785">
    <property type="entry name" value="Winged helix' DNA-binding domain"/>
    <property type="match status" value="1"/>
</dbReference>
<proteinExistence type="evidence at protein level"/>
<evidence type="ECO:0000256" key="1">
    <source>
        <dbReference type="SAM" id="MobiDB-lite"/>
    </source>
</evidence>
<evidence type="ECO:0000269" key="2">
    <source>
    </source>
</evidence>
<evidence type="ECO:0000269" key="3">
    <source>
    </source>
</evidence>
<evidence type="ECO:0000269" key="4">
    <source>
    </source>
</evidence>
<evidence type="ECO:0000269" key="5">
    <source>
    </source>
</evidence>
<evidence type="ECO:0000269" key="6">
    <source>
    </source>
</evidence>
<evidence type="ECO:0000269" key="7">
    <source>
    </source>
</evidence>
<evidence type="ECO:0000269" key="8">
    <source>
    </source>
</evidence>
<evidence type="ECO:0000269" key="9">
    <source>
    </source>
</evidence>
<evidence type="ECO:0000269" key="10">
    <source>
    </source>
</evidence>
<evidence type="ECO:0000305" key="11"/>
<evidence type="ECO:0007744" key="12">
    <source>
    </source>
</evidence>
<evidence type="ECO:0007829" key="13">
    <source>
        <dbReference type="PDB" id="4UX3"/>
    </source>
</evidence>
<evidence type="ECO:0007829" key="14">
    <source>
        <dbReference type="PDB" id="5FRP"/>
    </source>
</evidence>
<evidence type="ECO:0007829" key="15">
    <source>
        <dbReference type="PDB" id="6QPQ"/>
    </source>
</evidence>
<evidence type="ECO:0007829" key="16">
    <source>
        <dbReference type="PDB" id="6ZZ6"/>
    </source>
</evidence>
<reference key="1">
    <citation type="journal article" date="1997" name="Cell">
        <title>Cohesins: chromosomal proteins that prevent premature separation of sister chromatids.</title>
        <authorList>
            <person name="Michaelis C."/>
            <person name="Ciosk R."/>
            <person name="Nasmyth K."/>
        </authorList>
    </citation>
    <scope>NUCLEOTIDE SEQUENCE [GENOMIC DNA]</scope>
    <scope>FUNCTION</scope>
    <scope>SUBCELLULAR LOCATION</scope>
    <source>
        <strain>ATCC 200060 / W303</strain>
    </source>
</reference>
<reference key="2">
    <citation type="journal article" date="1997" name="Cell">
        <title>A direct link between sister chromatid cohesion and chromosome condensation revealed through the analysis of MCD1 in S. cerevisiae.</title>
        <authorList>
            <person name="Guacci V."/>
            <person name="Koshland D."/>
            <person name="Strunnikov A.V."/>
        </authorList>
    </citation>
    <scope>NUCLEOTIDE SEQUENCE [GENOMIC DNA]</scope>
    <scope>FUNCTION</scope>
    <scope>SUBCELLULAR LOCATION</scope>
    <source>
        <strain>ATCC 204508 / S288c</strain>
    </source>
</reference>
<reference key="3">
    <citation type="journal article" date="1997" name="Nature">
        <title>The nucleotide sequence of Saccharomyces cerevisiae chromosome IV.</title>
        <authorList>
            <person name="Jacq C."/>
            <person name="Alt-Moerbe J."/>
            <person name="Andre B."/>
            <person name="Arnold W."/>
            <person name="Bahr A."/>
            <person name="Ballesta J.P.G."/>
            <person name="Bargues M."/>
            <person name="Baron L."/>
            <person name="Becker A."/>
            <person name="Biteau N."/>
            <person name="Bloecker H."/>
            <person name="Blugeon C."/>
            <person name="Boskovic J."/>
            <person name="Brandt P."/>
            <person name="Brueckner M."/>
            <person name="Buitrago M.J."/>
            <person name="Coster F."/>
            <person name="Delaveau T."/>
            <person name="del Rey F."/>
            <person name="Dujon B."/>
            <person name="Eide L.G."/>
            <person name="Garcia-Cantalejo J.M."/>
            <person name="Goffeau A."/>
            <person name="Gomez-Peris A."/>
            <person name="Granotier C."/>
            <person name="Hanemann V."/>
            <person name="Hankeln T."/>
            <person name="Hoheisel J.D."/>
            <person name="Jaeger W."/>
            <person name="Jimenez A."/>
            <person name="Jonniaux J.-L."/>
            <person name="Kraemer C."/>
            <person name="Kuester H."/>
            <person name="Laamanen P."/>
            <person name="Legros Y."/>
            <person name="Louis E.J."/>
            <person name="Moeller-Rieker S."/>
            <person name="Monnet A."/>
            <person name="Moro M."/>
            <person name="Mueller-Auer S."/>
            <person name="Nussbaumer B."/>
            <person name="Paricio N."/>
            <person name="Paulin L."/>
            <person name="Perea J."/>
            <person name="Perez-Alonso M."/>
            <person name="Perez-Ortin J.E."/>
            <person name="Pohl T.M."/>
            <person name="Prydz H."/>
            <person name="Purnelle B."/>
            <person name="Rasmussen S.W."/>
            <person name="Remacha M.A."/>
            <person name="Revuelta J.L."/>
            <person name="Rieger M."/>
            <person name="Salom D."/>
            <person name="Saluz H.P."/>
            <person name="Saiz J.E."/>
            <person name="Saren A.-M."/>
            <person name="Schaefer M."/>
            <person name="Scharfe M."/>
            <person name="Schmidt E.R."/>
            <person name="Schneider C."/>
            <person name="Scholler P."/>
            <person name="Schwarz S."/>
            <person name="Soler-Mira A."/>
            <person name="Urrestarazu L.A."/>
            <person name="Verhasselt P."/>
            <person name="Vissers S."/>
            <person name="Voet M."/>
            <person name="Volckaert G."/>
            <person name="Wagner G."/>
            <person name="Wambutt R."/>
            <person name="Wedler E."/>
            <person name="Wedler H."/>
            <person name="Woelfl S."/>
            <person name="Harris D.E."/>
            <person name="Bowman S."/>
            <person name="Brown D."/>
            <person name="Churcher C.M."/>
            <person name="Connor R."/>
            <person name="Dedman K."/>
            <person name="Gentles S."/>
            <person name="Hamlin N."/>
            <person name="Hunt S."/>
            <person name="Jones L."/>
            <person name="McDonald S."/>
            <person name="Murphy L.D."/>
            <person name="Niblett D."/>
            <person name="Odell C."/>
            <person name="Oliver K."/>
            <person name="Rajandream M.A."/>
            <person name="Richards C."/>
            <person name="Shore L."/>
            <person name="Walsh S.V."/>
            <person name="Barrell B.G."/>
            <person name="Dietrich F.S."/>
            <person name="Mulligan J.T."/>
            <person name="Allen E."/>
            <person name="Araujo R."/>
            <person name="Aviles E."/>
            <person name="Berno A."/>
            <person name="Carpenter J."/>
            <person name="Chen E."/>
            <person name="Cherry J.M."/>
            <person name="Chung E."/>
            <person name="Duncan M."/>
            <person name="Hunicke-Smith S."/>
            <person name="Hyman R.W."/>
            <person name="Komp C."/>
            <person name="Lashkari D."/>
            <person name="Lew H."/>
            <person name="Lin D."/>
            <person name="Mosedale D."/>
            <person name="Nakahara K."/>
            <person name="Namath A."/>
            <person name="Oefner P."/>
            <person name="Oh C."/>
            <person name="Petel F.X."/>
            <person name="Roberts D."/>
            <person name="Schramm S."/>
            <person name="Schroeder M."/>
            <person name="Shogren T."/>
            <person name="Shroff N."/>
            <person name="Winant A."/>
            <person name="Yelton M.A."/>
            <person name="Botstein D."/>
            <person name="Davis R.W."/>
            <person name="Johnston M."/>
            <person name="Andrews S."/>
            <person name="Brinkman R."/>
            <person name="Cooper J."/>
            <person name="Ding H."/>
            <person name="Du Z."/>
            <person name="Favello A."/>
            <person name="Fulton L."/>
            <person name="Gattung S."/>
            <person name="Greco T."/>
            <person name="Hallsworth K."/>
            <person name="Hawkins J."/>
            <person name="Hillier L.W."/>
            <person name="Jier M."/>
            <person name="Johnson D."/>
            <person name="Johnston L."/>
            <person name="Kirsten J."/>
            <person name="Kucaba T."/>
            <person name="Langston Y."/>
            <person name="Latreille P."/>
            <person name="Le T."/>
            <person name="Mardis E."/>
            <person name="Menezes S."/>
            <person name="Miller N."/>
            <person name="Nhan M."/>
            <person name="Pauley A."/>
            <person name="Peluso D."/>
            <person name="Rifkin L."/>
            <person name="Riles L."/>
            <person name="Taich A."/>
            <person name="Trevaskis E."/>
            <person name="Vignati D."/>
            <person name="Wilcox L."/>
            <person name="Wohldman P."/>
            <person name="Vaudin M."/>
            <person name="Wilson R."/>
            <person name="Waterston R."/>
            <person name="Albermann K."/>
            <person name="Hani J."/>
            <person name="Heumann K."/>
            <person name="Kleine K."/>
            <person name="Mewes H.-W."/>
            <person name="Zollner A."/>
            <person name="Zaccaria P."/>
        </authorList>
    </citation>
    <scope>NUCLEOTIDE SEQUENCE [LARGE SCALE GENOMIC DNA]</scope>
    <source>
        <strain>ATCC 204508 / S288c</strain>
    </source>
</reference>
<reference key="4">
    <citation type="journal article" date="2014" name="G3 (Bethesda)">
        <title>The reference genome sequence of Saccharomyces cerevisiae: Then and now.</title>
        <authorList>
            <person name="Engel S.R."/>
            <person name="Dietrich F.S."/>
            <person name="Fisk D.G."/>
            <person name="Binkley G."/>
            <person name="Balakrishnan R."/>
            <person name="Costanzo M.C."/>
            <person name="Dwight S.S."/>
            <person name="Hitz B.C."/>
            <person name="Karra K."/>
            <person name="Nash R.S."/>
            <person name="Weng S."/>
            <person name="Wong E.D."/>
            <person name="Lloyd P."/>
            <person name="Skrzypek M.S."/>
            <person name="Miyasato S.R."/>
            <person name="Simison M."/>
            <person name="Cherry J.M."/>
        </authorList>
    </citation>
    <scope>GENOME REANNOTATION</scope>
    <source>
        <strain>ATCC 204508 / S288c</strain>
    </source>
</reference>
<reference key="5">
    <citation type="journal article" date="1998" name="Mol. Gen. Genet.">
        <title>The RHC21 gene of budding yeast, a homologue of the fission yeast rad21+ gene, is essential for chromosome segregation.</title>
        <authorList>
            <person name="Heo S.-J."/>
            <person name="Tatebayashi K."/>
            <person name="Kato J."/>
            <person name="Ikeda H."/>
        </authorList>
    </citation>
    <scope>FUNCTION</scope>
</reference>
<reference key="6">
    <citation type="journal article" date="1999" name="Genes Dev.">
        <title>Yeast cohesin complex requires a conserved protein, Eco1p(Ctf7), to establish cohesion between sister chromatids during DNA replication.</title>
        <authorList>
            <person name="Toth A."/>
            <person name="Ciosk R."/>
            <person name="Uhlmann F."/>
            <person name="Galova M."/>
            <person name="Schleiffer A."/>
            <person name="Nasmyth K."/>
        </authorList>
    </citation>
    <scope>SUBCELLULAR LOCATION</scope>
    <scope>INTERACTION WITH IRR1</scope>
    <scope>IDENTIFICATION IN A COHESIN COMPLEX WITH SMC1; SMC3 AND IRR1</scope>
    <scope>INTERACTION OF THE COHESIN COMPLEX WITH SCC2</scope>
</reference>
<reference key="7">
    <citation type="journal article" date="1999" name="Nature">
        <title>Sister-chromatid separation at anaphase onset is promoted by cleavage of the cohesin subunit Scc1.</title>
        <authorList>
            <person name="Uhlmann F."/>
            <person name="Lottspeich F."/>
            <person name="Nasmyth K."/>
        </authorList>
    </citation>
    <scope>CLEAVAGE BY ESP1</scope>
    <scope>FUNCTION</scope>
    <scope>MUTAGENESIS OF ARG-180 AND ARG-268</scope>
</reference>
<reference key="8">
    <citation type="journal article" date="2001" name="Cell">
        <title>Phosphorylation of the cohesin subunit Scc1 by Polo/Cdc5 kinase regulates sister chromatid separation in yeast.</title>
        <authorList>
            <person name="Alexandru G."/>
            <person name="Uhlmann F."/>
            <person name="Mechtler K."/>
            <person name="Poupart M.-A."/>
            <person name="Nasmyth K."/>
        </authorList>
    </citation>
    <scope>PHOSPHORYLATION AT SER-175 AND SER-263 BY CDC5</scope>
    <scope>MUTAGENESIS OF SER-175 AND SER-263</scope>
</reference>
<reference key="9">
    <citation type="journal article" date="2002" name="Mol. Cell">
        <title>Molecular architecture of SMC proteins and the yeast cohesin complex.</title>
        <authorList>
            <person name="Haering C.H."/>
            <person name="Loewe J."/>
            <person name="Hochwagen A."/>
            <person name="Nasmyth K."/>
        </authorList>
    </citation>
    <scope>IDENTIFICATION IN A COHESIN COMPLEX WITH SMC1; SMC3 AND IRR1</scope>
    <scope>STRUCTURE</scope>
</reference>
<reference key="10">
    <citation type="journal article" date="2002" name="Curr. Biol.">
        <title>Eco1 is a novel acetyltransferase that can acetylate proteins involved in cohesion.</title>
        <authorList>
            <person name="Ivanov D."/>
            <person name="Schleiffer A."/>
            <person name="Eisenhaber F."/>
            <person name="Mechtler K."/>
            <person name="Haering C.H."/>
            <person name="Nasmyth K."/>
        </authorList>
    </citation>
    <scope>ACETYLATION AT LYS-210</scope>
    <scope>MUTAGENESIS OF LYS-210; LYS-252; LYS-290; LYS-310; LYS-319 AND LYS-324</scope>
</reference>
<reference key="11">
    <citation type="journal article" date="2003" name="Nature">
        <title>Global analysis of protein expression in yeast.</title>
        <authorList>
            <person name="Ghaemmaghami S."/>
            <person name="Huh W.-K."/>
            <person name="Bower K."/>
            <person name="Howson R.W."/>
            <person name="Belle A."/>
            <person name="Dephoure N."/>
            <person name="O'Shea E.K."/>
            <person name="Weissman J.S."/>
        </authorList>
    </citation>
    <scope>LEVEL OF PROTEIN EXPRESSION [LARGE SCALE ANALYSIS]</scope>
</reference>
<reference key="12">
    <citation type="journal article" date="2008" name="Mol. Cell. Proteomics">
        <title>A multidimensional chromatography technology for in-depth phosphoproteome analysis.</title>
        <authorList>
            <person name="Albuquerque C.P."/>
            <person name="Smolka M.B."/>
            <person name="Payne S.H."/>
            <person name="Bafna V."/>
            <person name="Eng J."/>
            <person name="Zhou H."/>
        </authorList>
    </citation>
    <scope>PHOSPHORYLATION [LARGE SCALE ANALYSIS] AT SER-161; SER-307 AND THR-354</scope>
    <scope>IDENTIFICATION BY MASS SPECTROMETRY [LARGE SCALE ANALYSIS]</scope>
</reference>
<reference key="13">
    <citation type="journal article" date="2009" name="Science">
        <title>Global analysis of Cdk1 substrate phosphorylation sites provides insights into evolution.</title>
        <authorList>
            <person name="Holt L.J."/>
            <person name="Tuch B.B."/>
            <person name="Villen J."/>
            <person name="Johnson A.D."/>
            <person name="Gygi S.P."/>
            <person name="Morgan D.O."/>
        </authorList>
    </citation>
    <scope>IDENTIFICATION BY MASS SPECTROMETRY [LARGE SCALE ANALYSIS]</scope>
</reference>
<protein>
    <recommendedName>
        <fullName>Sister chromatid cohesion protein 1</fullName>
    </recommendedName>
</protein>
<feature type="chain" id="PRO_0000097881" description="Sister chromatid cohesion protein 1">
    <location>
        <begin position="1"/>
        <end position="566"/>
    </location>
</feature>
<feature type="region of interest" description="Disordered" evidence="1">
    <location>
        <begin position="325"/>
        <end position="356"/>
    </location>
</feature>
<feature type="site" description="Cleavage; by ESP1">
    <location>
        <begin position="180"/>
        <end position="181"/>
    </location>
</feature>
<feature type="site" description="Cleavage; by ESP1">
    <location>
        <begin position="268"/>
        <end position="269"/>
    </location>
</feature>
<feature type="modified residue" description="Phosphoserine" evidence="12">
    <location>
        <position position="161"/>
    </location>
</feature>
<feature type="modified residue" description="Phosphoserine; by CDC5" evidence="3">
    <location>
        <position position="175"/>
    </location>
</feature>
<feature type="modified residue" description="N6-acetyllysine; by ECO1" evidence="4">
    <location>
        <position position="210"/>
    </location>
</feature>
<feature type="modified residue" description="Phosphoserine; by CDC5" evidence="3">
    <location>
        <position position="263"/>
    </location>
</feature>
<feature type="modified residue" description="Phosphoserine" evidence="12">
    <location>
        <position position="307"/>
    </location>
</feature>
<feature type="modified residue" description="Phosphothreonine" evidence="12">
    <location>
        <position position="354"/>
    </location>
</feature>
<feature type="mutagenesis site" description="Reduces phosphorylation. Abolishes phosphorylation; when associated with A-263." evidence="3">
    <original>S</original>
    <variation>A</variation>
    <location>
        <position position="175"/>
    </location>
</feature>
<feature type="mutagenesis site" description="Abolishes cleavage by ESP1; when associated with D-268." evidence="2">
    <original>R</original>
    <variation>D</variation>
    <location>
        <position position="180"/>
    </location>
</feature>
<feature type="mutagenesis site" description="Loss of acetylation by ECO1." evidence="4">
    <original>K</original>
    <variation>R</variation>
    <location>
        <position position="210"/>
    </location>
</feature>
<feature type="mutagenesis site" description="No effect on acetylation by ECO1." evidence="4">
    <original>K</original>
    <variation>R</variation>
    <location>
        <position position="252"/>
    </location>
</feature>
<feature type="mutagenesis site" description="Reduces phosphorylation. Abolishes phosphorylation; when associated with A-175." evidence="3">
    <original>S</original>
    <variation>A</variation>
    <location>
        <position position="263"/>
    </location>
</feature>
<feature type="mutagenesis site" description="Abolishes first cleavage by ESP1. Abolishes all cleavage by ESP1; when associated with D-180." evidence="2">
    <original>R</original>
    <variation>D</variation>
    <location>
        <position position="268"/>
    </location>
</feature>
<feature type="mutagenesis site" description="No effect on acetylation by ECO1." evidence="4">
    <original>K</original>
    <variation>R</variation>
    <location>
        <position position="290"/>
    </location>
</feature>
<feature type="mutagenesis site" description="No effect on acetylation by ECO1." evidence="4">
    <original>K</original>
    <variation>R</variation>
    <location>
        <position position="310"/>
    </location>
</feature>
<feature type="mutagenesis site" description="No effect on acetylation by ECO1." evidence="4">
    <original>K</original>
    <variation>R</variation>
    <location>
        <position position="319"/>
    </location>
</feature>
<feature type="mutagenesis site" description="No effect on acetylation by ECO1." evidence="4">
    <original>K</original>
    <variation>R</variation>
    <location>
        <position position="324"/>
    </location>
</feature>
<feature type="helix" evidence="13">
    <location>
        <begin position="26"/>
        <end position="28"/>
    </location>
</feature>
<feature type="helix" evidence="13">
    <location>
        <begin position="44"/>
        <end position="51"/>
    </location>
</feature>
<feature type="turn" evidence="13">
    <location>
        <begin position="52"/>
        <end position="54"/>
    </location>
</feature>
<feature type="strand" evidence="13">
    <location>
        <begin position="56"/>
        <end position="58"/>
    </location>
</feature>
<feature type="helix" evidence="13">
    <location>
        <begin position="69"/>
        <end position="100"/>
    </location>
</feature>
<feature type="strand" evidence="14">
    <location>
        <begin position="134"/>
        <end position="138"/>
    </location>
</feature>
<feature type="helix" evidence="15">
    <location>
        <begin position="484"/>
        <end position="498"/>
    </location>
</feature>
<feature type="strand" evidence="15">
    <location>
        <begin position="499"/>
        <end position="503"/>
    </location>
</feature>
<feature type="helix" evidence="15">
    <location>
        <begin position="504"/>
        <end position="512"/>
    </location>
</feature>
<feature type="helix" evidence="15">
    <location>
        <begin position="516"/>
        <end position="518"/>
    </location>
</feature>
<feature type="helix" evidence="15">
    <location>
        <begin position="521"/>
        <end position="536"/>
    </location>
</feature>
<feature type="strand" evidence="15">
    <location>
        <begin position="539"/>
        <end position="543"/>
    </location>
</feature>
<feature type="strand" evidence="16">
    <location>
        <begin position="546"/>
        <end position="548"/>
    </location>
</feature>
<feature type="strand" evidence="15">
    <location>
        <begin position="552"/>
        <end position="555"/>
    </location>
</feature>
<feature type="helix" evidence="15">
    <location>
        <begin position="557"/>
        <end position="560"/>
    </location>
</feature>
<sequence length="566" mass="63290">MVTENPQRLTVLRLATNKGPLAQIWLASNMSNIPRGSVIQTHIAESAKEIAKASGCDDESGDNEYITLRTSGELLQGIVRVYSKQATFLLTDIKDTLTKISMLFKTSQKMTSTVNRLNTVTRVHQLMLEDAVTEREVLVTPGLEFLDDTTIPVGLMAQENSMERKVQGAAPWDTSLEVGRRFSPDEDFEHNNLSSMNLDFDIEEGPITSKSWEEGTRQSSRNFDTHENYIQDDDFPLDDAGTIGWDLGITEKNDQNNDDDDNSVEQGRRLGESIMSEEPTDFGFDLDIEKEAPAGNIDTITDAMTESQPKQTGTRRNSKLLNTKSIQIDEETENSESIASSNTYKEERSNNLLTPQPTNFTTKRLWSEITESMSYLPDPILKNFLSYESLKKRKIHNGREGSIEEPELNVSLNLTDDVISNAGTNDNSFNELTDNMSDFVPIDAGLNEAPFPEENIIDAKTRNEQTTIQTEKVRPTPGEVASKAIVQMAKILRKELSEEKEVIFTDVLKSQANTEPENITKREASRGFFDILSLATEGCIGLSQTEAFGNIKIDAKPALFERFINA</sequence>
<keyword id="KW-0002">3D-structure</keyword>
<keyword id="KW-0007">Acetylation</keyword>
<keyword id="KW-0131">Cell cycle</keyword>
<keyword id="KW-0132">Cell division</keyword>
<keyword id="KW-0137">Centromere</keyword>
<keyword id="KW-0158">Chromosome</keyword>
<keyword id="KW-0159">Chromosome partition</keyword>
<keyword id="KW-0498">Mitosis</keyword>
<keyword id="KW-0539">Nucleus</keyword>
<keyword id="KW-0597">Phosphoprotein</keyword>
<keyword id="KW-1185">Reference proteome</keyword>
<gene>
    <name type="primary">MCD1</name>
    <name type="synonym">PDS3</name>
    <name type="synonym">RHC21</name>
    <name type="synonym">SCC1</name>
    <name type="ordered locus">YDL003W</name>
    <name type="ORF">YD8119.04</name>
</gene>
<name>SCC1_YEAST</name>
<organism>
    <name type="scientific">Saccharomyces cerevisiae (strain ATCC 204508 / S288c)</name>
    <name type="common">Baker's yeast</name>
    <dbReference type="NCBI Taxonomy" id="559292"/>
    <lineage>
        <taxon>Eukaryota</taxon>
        <taxon>Fungi</taxon>
        <taxon>Dikarya</taxon>
        <taxon>Ascomycota</taxon>
        <taxon>Saccharomycotina</taxon>
        <taxon>Saccharomycetes</taxon>
        <taxon>Saccharomycetales</taxon>
        <taxon>Saccharomycetaceae</taxon>
        <taxon>Saccharomyces</taxon>
    </lineage>
</organism>